<feature type="chain" id="PRO_0000084099" description="Hyalin">
    <location>
        <begin position="1" status="less than"/>
        <end position="1200" status="greater than"/>
    </location>
</feature>
<feature type="domain" description="HYR 1" evidence="1">
    <location>
        <begin position="1" status="less than"/>
        <end position="39"/>
    </location>
</feature>
<feature type="domain" description="HYR 2" evidence="1">
    <location>
        <begin position="40"/>
        <end position="123"/>
    </location>
</feature>
<feature type="domain" description="HYR 3" evidence="1">
    <location>
        <begin position="124"/>
        <end position="207"/>
    </location>
</feature>
<feature type="domain" description="HYR 4" evidence="1">
    <location>
        <begin position="208"/>
        <end position="292"/>
    </location>
</feature>
<feature type="domain" description="HYR 5" evidence="1">
    <location>
        <begin position="293"/>
        <end position="376"/>
    </location>
</feature>
<feature type="domain" description="HYR 6" evidence="1">
    <location>
        <begin position="377"/>
        <end position="460"/>
    </location>
</feature>
<feature type="domain" description="HYR 7" evidence="1">
    <location>
        <begin position="461"/>
        <end position="544"/>
    </location>
</feature>
<feature type="domain" description="HYR 8" evidence="1">
    <location>
        <begin position="546"/>
        <end position="629"/>
    </location>
</feature>
<feature type="domain" description="HYR 9" evidence="1">
    <location>
        <begin position="630"/>
        <end position="713"/>
    </location>
</feature>
<feature type="domain" description="HYR 10" evidence="1">
    <location>
        <begin position="714"/>
        <end position="797"/>
    </location>
</feature>
<feature type="domain" description="HYR 11" evidence="1">
    <location>
        <begin position="798"/>
        <end position="881"/>
    </location>
</feature>
<feature type="domain" description="HYR 12" evidence="1">
    <location>
        <begin position="882"/>
        <end position="966"/>
    </location>
</feature>
<feature type="domain" description="HYR 13" evidence="1">
    <location>
        <begin position="967"/>
        <end position="1050"/>
    </location>
</feature>
<feature type="domain" description="HYR 14" evidence="1">
    <location>
        <begin position="1051"/>
        <end position="1133"/>
    </location>
</feature>
<feature type="domain" description="HYR 15" evidence="1">
    <location>
        <begin position="1134"/>
        <end position="1200" status="greater than"/>
    </location>
</feature>
<feature type="non-terminal residue">
    <location>
        <position position="1"/>
    </location>
</feature>
<feature type="non-terminal residue">
    <location>
        <position position="1200"/>
    </location>
</feature>
<proteinExistence type="evidence at transcript level"/>
<reference key="1">
    <citation type="journal article" date="1998" name="Dev. Biol.">
        <title>A molecular analysis of hyalin -- a substrate for cell adhesion in the hyaline layer of the sea urchin embryo.</title>
        <authorList>
            <person name="Wessel G.M."/>
            <person name="Berg L."/>
            <person name="Adelson D.L."/>
            <person name="Cannon G."/>
            <person name="McClay D.R."/>
        </authorList>
    </citation>
    <scope>NUCLEOTIDE SEQUENCE [MRNA]</scope>
</reference>
<comment type="function">
    <text>Major constituent of the hyaline layer. The hyaline layer of echinoderm embryos is an extraembryonic matrix that functions as a substrate for cell adhesion through early development.</text>
</comment>
<comment type="subunit">
    <text>Homooligomer in presence of calcium.</text>
</comment>
<comment type="subcellular location">
    <subcellularLocation>
        <location>Secreted</location>
        <location>Extracellular space</location>
        <location>Extracellular matrix</location>
    </subcellularLocation>
</comment>
<comment type="PTM">
    <text>Glycosylated.</text>
</comment>
<accession>O76536</accession>
<organism>
    <name type="scientific">Strongylocentrotus purpuratus</name>
    <name type="common">Purple sea urchin</name>
    <dbReference type="NCBI Taxonomy" id="7668"/>
    <lineage>
        <taxon>Eukaryota</taxon>
        <taxon>Metazoa</taxon>
        <taxon>Echinodermata</taxon>
        <taxon>Eleutherozoa</taxon>
        <taxon>Echinozoa</taxon>
        <taxon>Echinoidea</taxon>
        <taxon>Euechinoidea</taxon>
        <taxon>Echinacea</taxon>
        <taxon>Camarodonta</taxon>
        <taxon>Echinidea</taxon>
        <taxon>Strongylocentrotidae</taxon>
        <taxon>Strongylocentrotus</taxon>
    </lineage>
</organism>
<protein>
    <recommendedName>
        <fullName>Hyalin</fullName>
    </recommendedName>
</protein>
<dbReference type="EMBL" id="AF076472">
    <property type="protein sequence ID" value="AAC31909.1"/>
    <property type="molecule type" value="mRNA"/>
</dbReference>
<dbReference type="PIR" id="T17404">
    <property type="entry name" value="T17404"/>
</dbReference>
<dbReference type="STRING" id="7668.O76536"/>
<dbReference type="InParanoid" id="O76536"/>
<dbReference type="Proteomes" id="UP000007110">
    <property type="component" value="Unassembled WGS sequence"/>
</dbReference>
<dbReference type="GO" id="GO:0005576">
    <property type="term" value="C:extracellular region"/>
    <property type="evidence" value="ECO:0007669"/>
    <property type="project" value="UniProtKB-KW"/>
</dbReference>
<dbReference type="GO" id="GO:0007155">
    <property type="term" value="P:cell adhesion"/>
    <property type="evidence" value="ECO:0007669"/>
    <property type="project" value="UniProtKB-KW"/>
</dbReference>
<dbReference type="InterPro" id="IPR003410">
    <property type="entry name" value="HYR_dom"/>
</dbReference>
<dbReference type="PANTHER" id="PTHR24273">
    <property type="entry name" value="FI04643P-RELATED"/>
    <property type="match status" value="1"/>
</dbReference>
<dbReference type="PANTHER" id="PTHR24273:SF32">
    <property type="entry name" value="HYALIN"/>
    <property type="match status" value="1"/>
</dbReference>
<dbReference type="Pfam" id="PF02494">
    <property type="entry name" value="HYR"/>
    <property type="match status" value="15"/>
</dbReference>
<dbReference type="PROSITE" id="PS50825">
    <property type="entry name" value="HYR"/>
    <property type="match status" value="15"/>
</dbReference>
<keyword id="KW-0130">Cell adhesion</keyword>
<keyword id="KW-0272">Extracellular matrix</keyword>
<keyword id="KW-0325">Glycoprotein</keyword>
<keyword id="KW-1185">Reference proteome</keyword>
<keyword id="KW-0677">Repeat</keyword>
<keyword id="KW-0964">Secreted</keyword>
<sequence>SSHNPGQSFTTGTTTTVVYTATDAFANVGQCAFTITVTATDTTPPVVTVSSSTITRQVEVGTPGVNVFFTEPTATDNSGQAILISRTNQPGDFFSVGQTIVTYTFQDPSGNPASGTVTINVIEVDTTPPVVTVPSTTITRQVEVGSSGVNVFYTEPTATDNSGQAILTSRTNQPGDFFPVGQTTVTYTFQDPSGNPASGTVTINVIEVDTTPPVVTVPSTTITRQVEVGSSGVNVFYTEPTATDNSGQAILTSRTNQPGDFFPVGQTTVTYTFSQDPSGNPASATVTINVIEVDTTPPVVTVPSTTITRQVEIGTPGVNVFYTEPTATDNSGIANLVSRTNQPGDFFPVGQTDVTYTFQDPSGNPSSGTVTINVVEVDTTSPVITVPSNTITREVELGTPGVNVFYTEPTATDNSGIANLVSRTNQPGDFFNVGQTVVTYTFQDPSGNPASGTVTINVVEVDTTPPQVFVTTGEVVRTAPFGSSGVNVFFTEPVAIDNSGTADLVSQTAQPGDFFPIGSTVVTYRYRDASGNEATGTFTVTVEEMVDTTPPTVTVSGGNIVRTVELGQSRLSVIYTEPTATDNSGEANLVSRTAQPGDLFPVGTTTVEYVYQDPAGNEGRGQFTVTVIAVDTTPPSVNCPNNVFQEVELGTSSAPVFFTEPTAFDISGQANLVTRTAAPGDSFPVGTTSVSYIFSDNSGNEAEPCTFTVTISAVDTTPPTVNCINNVAQTVQLGTGSTQVFFTEPTAFDISGQTSLVTRTSAPGDSFPVGTTSVTYIFTDASGNNAQPCTFNVVINAVDTTPPTVNCANNIAQTIELGSTSAVVNYAEPSATDISGTAFLVSRSSSPGDSFPIGSTTVTYIFSDQSGNEAPPCVFTVTIGTVDTMMPMFTSCPNNIVQSVELGVPGTVISWTTPTANDAAGIASIVSNLQPGSFFTVGESATVTYVATDNSGLTDNSCSFTVTVFAVDTTPPSVVCTNNVFQTVELGTNPVQVFYTEPTASDISGQANLVSRTNVPGDSFPVGTSTVTYVFADNSGNTADACSFTITVTAQDTTPPTVNCITNIVRTVELGTSSVQVFYNEPTASDLGQASLVSRTAQPGDNFPVGVNPVTYVFGDNSGNQADPCTFTITVNTQDTTPPTVTCISDITRVVELGTTSVGISYTEPTATDISGTATLDSRSHTPGQNFPVGSTVVSYFFSD</sequence>
<evidence type="ECO:0000255" key="1">
    <source>
        <dbReference type="PROSITE-ProRule" id="PRU00113"/>
    </source>
</evidence>
<name>HYAL_STRPU</name>